<keyword id="KW-0997">Cell inner membrane</keyword>
<keyword id="KW-1003">Cell membrane</keyword>
<keyword id="KW-0143">Chaperone</keyword>
<keyword id="KW-1015">Disulfide bond</keyword>
<keyword id="KW-0249">Electron transport</keyword>
<keyword id="KW-0472">Membrane</keyword>
<keyword id="KW-0560">Oxidoreductase</keyword>
<keyword id="KW-0676">Redox-active center</keyword>
<keyword id="KW-1185">Reference proteome</keyword>
<keyword id="KW-0812">Transmembrane</keyword>
<keyword id="KW-1133">Transmembrane helix</keyword>
<keyword id="KW-0813">Transport</keyword>
<comment type="function">
    <text evidence="1">Required for disulfide bond formation in some proteins.</text>
</comment>
<comment type="subcellular location">
    <subcellularLocation>
        <location evidence="1">Cell inner membrane</location>
        <topology evidence="1">Multi-pass membrane protein</topology>
    </subcellularLocation>
</comment>
<comment type="similarity">
    <text evidence="1">Belongs to the DsbB family. BdbC subfamily.</text>
</comment>
<name>BDBC_CHLTR</name>
<proteinExistence type="inferred from homology"/>
<gene>
    <name type="ordered locus">CT_176</name>
</gene>
<sequence length="135" mass="15005">MIKHLRSYCLYLAWLFSCIGTLMSVYYSYILNVEPCLLCYYQRICLFPLVVILGIAAYREDISIKIYTLPLALVGFGIAIYQVCLQEIPGMTLDICGKVSCSTKLFLLGFITMPMASAAAFCAIACLLVLATKSK</sequence>
<dbReference type="EMBL" id="AE001273">
    <property type="protein sequence ID" value="AAC67767.1"/>
    <property type="molecule type" value="Genomic_DNA"/>
</dbReference>
<dbReference type="PIR" id="G71547">
    <property type="entry name" value="G71547"/>
</dbReference>
<dbReference type="RefSeq" id="WP_009871522.1">
    <property type="nucleotide sequence ID" value="NC_000117.1"/>
</dbReference>
<dbReference type="FunCoup" id="O84179">
    <property type="interactions" value="1"/>
</dbReference>
<dbReference type="STRING" id="272561.CT_176"/>
<dbReference type="EnsemblBacteria" id="AAC67767">
    <property type="protein sequence ID" value="AAC67767"/>
    <property type="gene ID" value="CT_176"/>
</dbReference>
<dbReference type="KEGG" id="ctr:CT_176"/>
<dbReference type="PATRIC" id="fig|272561.5.peg.190"/>
<dbReference type="HOGENOM" id="CLU_128688_0_0_0"/>
<dbReference type="InParanoid" id="O84179"/>
<dbReference type="OrthoDB" id="158402at2"/>
<dbReference type="Proteomes" id="UP000000431">
    <property type="component" value="Chromosome"/>
</dbReference>
<dbReference type="GO" id="GO:0005886">
    <property type="term" value="C:plasma membrane"/>
    <property type="evidence" value="ECO:0007669"/>
    <property type="project" value="UniProtKB-SubCell"/>
</dbReference>
<dbReference type="GO" id="GO:0015035">
    <property type="term" value="F:protein-disulfide reductase activity"/>
    <property type="evidence" value="ECO:0007669"/>
    <property type="project" value="UniProtKB-UniRule"/>
</dbReference>
<dbReference type="GO" id="GO:0006457">
    <property type="term" value="P:protein folding"/>
    <property type="evidence" value="ECO:0007669"/>
    <property type="project" value="InterPro"/>
</dbReference>
<dbReference type="Gene3D" id="1.20.1550.10">
    <property type="entry name" value="DsbB-like"/>
    <property type="match status" value="1"/>
</dbReference>
<dbReference type="HAMAP" id="MF_00287">
    <property type="entry name" value="BdbC"/>
    <property type="match status" value="1"/>
</dbReference>
<dbReference type="InterPro" id="IPR003752">
    <property type="entry name" value="DiS_bond_form_DsbB/BdbC"/>
</dbReference>
<dbReference type="InterPro" id="IPR012187">
    <property type="entry name" value="Disulphide_bond_form_BdbC"/>
</dbReference>
<dbReference type="InterPro" id="IPR023380">
    <property type="entry name" value="DsbB-like_sf"/>
</dbReference>
<dbReference type="NCBIfam" id="NF001863">
    <property type="entry name" value="PRK00611.1"/>
    <property type="match status" value="1"/>
</dbReference>
<dbReference type="PANTHER" id="PTHR43469">
    <property type="entry name" value="DISULFIDE FORMATION PROTEIN-RELATED"/>
    <property type="match status" value="1"/>
</dbReference>
<dbReference type="PANTHER" id="PTHR43469:SF1">
    <property type="entry name" value="SPBETA PROPHAGE-DERIVED DISULFIDE BOND FORMATION PROTEIN B"/>
    <property type="match status" value="1"/>
</dbReference>
<dbReference type="Pfam" id="PF02600">
    <property type="entry name" value="DsbB"/>
    <property type="match status" value="1"/>
</dbReference>
<dbReference type="PIRSF" id="PIRSF036659">
    <property type="entry name" value="BdbC"/>
    <property type="match status" value="1"/>
</dbReference>
<dbReference type="SUPFAM" id="SSF158442">
    <property type="entry name" value="DsbB-like"/>
    <property type="match status" value="1"/>
</dbReference>
<evidence type="ECO:0000255" key="1">
    <source>
        <dbReference type="HAMAP-Rule" id="MF_00287"/>
    </source>
</evidence>
<accession>O84179</accession>
<organism>
    <name type="scientific">Chlamydia trachomatis serovar D (strain ATCC VR-885 / DSM 19411 / UW-3/Cx)</name>
    <dbReference type="NCBI Taxonomy" id="272561"/>
    <lineage>
        <taxon>Bacteria</taxon>
        <taxon>Pseudomonadati</taxon>
        <taxon>Chlamydiota</taxon>
        <taxon>Chlamydiia</taxon>
        <taxon>Chlamydiales</taxon>
        <taxon>Chlamydiaceae</taxon>
        <taxon>Chlamydia/Chlamydophila group</taxon>
        <taxon>Chlamydia</taxon>
    </lineage>
</organism>
<reference key="1">
    <citation type="journal article" date="1998" name="Science">
        <title>Genome sequence of an obligate intracellular pathogen of humans: Chlamydia trachomatis.</title>
        <authorList>
            <person name="Stephens R.S."/>
            <person name="Kalman S."/>
            <person name="Lammel C.J."/>
            <person name="Fan J."/>
            <person name="Marathe R."/>
            <person name="Aravind L."/>
            <person name="Mitchell W.P."/>
            <person name="Olinger L."/>
            <person name="Tatusov R.L."/>
            <person name="Zhao Q."/>
            <person name="Koonin E.V."/>
            <person name="Davis R.W."/>
        </authorList>
    </citation>
    <scope>NUCLEOTIDE SEQUENCE [LARGE SCALE GENOMIC DNA]</scope>
    <source>
        <strain>ATCC VR-885 / DSM 19411 / UW-3/Cx</strain>
    </source>
</reference>
<protein>
    <recommendedName>
        <fullName evidence="1">Probable disulfide formation protein</fullName>
    </recommendedName>
    <alternativeName>
        <fullName evidence="1">Disulfide oxidoreductase</fullName>
    </alternativeName>
    <alternativeName>
        <fullName evidence="1">Thiol-disulfide oxidoreductase</fullName>
    </alternativeName>
</protein>
<feature type="chain" id="PRO_0000059382" description="Probable disulfide formation protein">
    <location>
        <begin position="1"/>
        <end position="135"/>
    </location>
</feature>
<feature type="transmembrane region" description="Helical" evidence="1">
    <location>
        <begin position="7"/>
        <end position="26"/>
    </location>
</feature>
<feature type="transmembrane region" description="Helical" evidence="1">
    <location>
        <begin position="41"/>
        <end position="60"/>
    </location>
</feature>
<feature type="transmembrane region" description="Helical" evidence="1">
    <location>
        <begin position="67"/>
        <end position="84"/>
    </location>
</feature>
<feature type="transmembrane region" description="Helical" evidence="1">
    <location>
        <begin position="109"/>
        <end position="131"/>
    </location>
</feature>
<feature type="disulfide bond" description="Redox-active" evidence="1">
    <location>
        <begin position="36"/>
        <end position="39"/>
    </location>
</feature>
<feature type="disulfide bond" description="Redox-active" evidence="1">
    <location>
        <begin position="96"/>
        <end position="101"/>
    </location>
</feature>